<comment type="function">
    <text evidence="1">Part of the Sec protein translocase complex. Interacts with the SecYEG preprotein conducting channel. Has a central role in coupling the hydrolysis of ATP to the transfer of proteins into and across the cell membrane, serving both as a receptor for the preprotein-SecB complex and as an ATP-driven molecular motor driving the stepwise translocation of polypeptide chains across the membrane.</text>
</comment>
<comment type="catalytic activity">
    <reaction evidence="1">
        <text>ATP + H2O + cellular proteinSide 1 = ADP + phosphate + cellular proteinSide 2.</text>
        <dbReference type="EC" id="7.4.2.8"/>
    </reaction>
</comment>
<comment type="cofactor">
    <cofactor evidence="1">
        <name>Zn(2+)</name>
        <dbReference type="ChEBI" id="CHEBI:29105"/>
    </cofactor>
    <text evidence="1">May bind 1 zinc ion per subunit.</text>
</comment>
<comment type="subunit">
    <text evidence="1">Monomer and homodimer. Part of the essential Sec protein translocation apparatus which comprises SecA, SecYEG and auxiliary proteins SecDF-YajC and YidC.</text>
</comment>
<comment type="subcellular location">
    <subcellularLocation>
        <location evidence="1">Cell inner membrane</location>
        <topology evidence="1">Peripheral membrane protein</topology>
        <orientation evidence="1">Cytoplasmic side</orientation>
    </subcellularLocation>
    <subcellularLocation>
        <location evidence="1">Cytoplasm</location>
    </subcellularLocation>
    <text evidence="1">Distribution is 50-50.</text>
</comment>
<comment type="similarity">
    <text evidence="1">Belongs to the SecA family.</text>
</comment>
<dbReference type="EC" id="7.4.2.8" evidence="1"/>
<dbReference type="EMBL" id="AM747720">
    <property type="protein sequence ID" value="CAR53776.1"/>
    <property type="molecule type" value="Genomic_DNA"/>
</dbReference>
<dbReference type="RefSeq" id="WP_006493335.1">
    <property type="nucleotide sequence ID" value="NC_011000.1"/>
</dbReference>
<dbReference type="SMR" id="B4E5Y3"/>
<dbReference type="GeneID" id="56557007"/>
<dbReference type="KEGG" id="bcj:BCAL3453"/>
<dbReference type="eggNOG" id="COG0653">
    <property type="taxonomic scope" value="Bacteria"/>
</dbReference>
<dbReference type="HOGENOM" id="CLU_005314_3_0_4"/>
<dbReference type="BioCyc" id="BCEN216591:G1G1V-3840-MONOMER"/>
<dbReference type="Proteomes" id="UP000001035">
    <property type="component" value="Chromosome 1"/>
</dbReference>
<dbReference type="GO" id="GO:0031522">
    <property type="term" value="C:cell envelope Sec protein transport complex"/>
    <property type="evidence" value="ECO:0007669"/>
    <property type="project" value="TreeGrafter"/>
</dbReference>
<dbReference type="GO" id="GO:0005829">
    <property type="term" value="C:cytosol"/>
    <property type="evidence" value="ECO:0007669"/>
    <property type="project" value="TreeGrafter"/>
</dbReference>
<dbReference type="GO" id="GO:0005886">
    <property type="term" value="C:plasma membrane"/>
    <property type="evidence" value="ECO:0007669"/>
    <property type="project" value="UniProtKB-SubCell"/>
</dbReference>
<dbReference type="GO" id="GO:0005524">
    <property type="term" value="F:ATP binding"/>
    <property type="evidence" value="ECO:0007669"/>
    <property type="project" value="UniProtKB-UniRule"/>
</dbReference>
<dbReference type="GO" id="GO:0046872">
    <property type="term" value="F:metal ion binding"/>
    <property type="evidence" value="ECO:0007669"/>
    <property type="project" value="UniProtKB-KW"/>
</dbReference>
<dbReference type="GO" id="GO:0008564">
    <property type="term" value="F:protein-exporting ATPase activity"/>
    <property type="evidence" value="ECO:0007669"/>
    <property type="project" value="UniProtKB-EC"/>
</dbReference>
<dbReference type="GO" id="GO:0065002">
    <property type="term" value="P:intracellular protein transmembrane transport"/>
    <property type="evidence" value="ECO:0007669"/>
    <property type="project" value="UniProtKB-UniRule"/>
</dbReference>
<dbReference type="GO" id="GO:0017038">
    <property type="term" value="P:protein import"/>
    <property type="evidence" value="ECO:0007669"/>
    <property type="project" value="InterPro"/>
</dbReference>
<dbReference type="GO" id="GO:0006605">
    <property type="term" value="P:protein targeting"/>
    <property type="evidence" value="ECO:0007669"/>
    <property type="project" value="UniProtKB-UniRule"/>
</dbReference>
<dbReference type="GO" id="GO:0043952">
    <property type="term" value="P:protein transport by the Sec complex"/>
    <property type="evidence" value="ECO:0007669"/>
    <property type="project" value="TreeGrafter"/>
</dbReference>
<dbReference type="CDD" id="cd17928">
    <property type="entry name" value="DEXDc_SecA"/>
    <property type="match status" value="1"/>
</dbReference>
<dbReference type="CDD" id="cd18803">
    <property type="entry name" value="SF2_C_secA"/>
    <property type="match status" value="1"/>
</dbReference>
<dbReference type="FunFam" id="3.40.50.300:FF:000081">
    <property type="entry name" value="Preprotein translocase subunit SecA"/>
    <property type="match status" value="1"/>
</dbReference>
<dbReference type="FunFam" id="3.40.50.300:FF:000113">
    <property type="entry name" value="Preprotein translocase subunit SecA"/>
    <property type="match status" value="1"/>
</dbReference>
<dbReference type="FunFam" id="3.90.1440.10:FF:000001">
    <property type="entry name" value="Preprotein translocase subunit SecA"/>
    <property type="match status" value="1"/>
</dbReference>
<dbReference type="FunFam" id="1.10.3060.10:FF:000003">
    <property type="entry name" value="Protein translocase subunit SecA"/>
    <property type="match status" value="1"/>
</dbReference>
<dbReference type="Gene3D" id="1.10.3060.10">
    <property type="entry name" value="Helical scaffold and wing domains of SecA"/>
    <property type="match status" value="1"/>
</dbReference>
<dbReference type="Gene3D" id="3.40.50.300">
    <property type="entry name" value="P-loop containing nucleotide triphosphate hydrolases"/>
    <property type="match status" value="2"/>
</dbReference>
<dbReference type="Gene3D" id="3.90.1440.10">
    <property type="entry name" value="SecA, preprotein cross-linking domain"/>
    <property type="match status" value="1"/>
</dbReference>
<dbReference type="HAMAP" id="MF_01382">
    <property type="entry name" value="SecA"/>
    <property type="match status" value="1"/>
</dbReference>
<dbReference type="InterPro" id="IPR014001">
    <property type="entry name" value="Helicase_ATP-bd"/>
</dbReference>
<dbReference type="InterPro" id="IPR001650">
    <property type="entry name" value="Helicase_C-like"/>
</dbReference>
<dbReference type="InterPro" id="IPR027417">
    <property type="entry name" value="P-loop_NTPase"/>
</dbReference>
<dbReference type="InterPro" id="IPR004027">
    <property type="entry name" value="SEC_C_motif"/>
</dbReference>
<dbReference type="InterPro" id="IPR000185">
    <property type="entry name" value="SecA"/>
</dbReference>
<dbReference type="InterPro" id="IPR020937">
    <property type="entry name" value="SecA_CS"/>
</dbReference>
<dbReference type="InterPro" id="IPR011115">
    <property type="entry name" value="SecA_DEAD"/>
</dbReference>
<dbReference type="InterPro" id="IPR014018">
    <property type="entry name" value="SecA_motor_DEAD"/>
</dbReference>
<dbReference type="InterPro" id="IPR011130">
    <property type="entry name" value="SecA_preprotein_X-link_dom"/>
</dbReference>
<dbReference type="InterPro" id="IPR044722">
    <property type="entry name" value="SecA_SF2_C"/>
</dbReference>
<dbReference type="InterPro" id="IPR011116">
    <property type="entry name" value="SecA_Wing/Scaffold"/>
</dbReference>
<dbReference type="InterPro" id="IPR036266">
    <property type="entry name" value="SecA_Wing/Scaffold_sf"/>
</dbReference>
<dbReference type="InterPro" id="IPR036670">
    <property type="entry name" value="SecA_X-link_sf"/>
</dbReference>
<dbReference type="NCBIfam" id="NF009538">
    <property type="entry name" value="PRK12904.1"/>
    <property type="match status" value="1"/>
</dbReference>
<dbReference type="NCBIfam" id="TIGR00963">
    <property type="entry name" value="secA"/>
    <property type="match status" value="1"/>
</dbReference>
<dbReference type="PANTHER" id="PTHR30612:SF0">
    <property type="entry name" value="CHLOROPLAST PROTEIN-TRANSPORTING ATPASE"/>
    <property type="match status" value="1"/>
</dbReference>
<dbReference type="PANTHER" id="PTHR30612">
    <property type="entry name" value="SECA INNER MEMBRANE COMPONENT OF SEC PROTEIN SECRETION SYSTEM"/>
    <property type="match status" value="1"/>
</dbReference>
<dbReference type="Pfam" id="PF21090">
    <property type="entry name" value="P-loop_SecA"/>
    <property type="match status" value="1"/>
</dbReference>
<dbReference type="Pfam" id="PF02810">
    <property type="entry name" value="SEC-C"/>
    <property type="match status" value="1"/>
</dbReference>
<dbReference type="Pfam" id="PF07517">
    <property type="entry name" value="SecA_DEAD"/>
    <property type="match status" value="1"/>
</dbReference>
<dbReference type="Pfam" id="PF01043">
    <property type="entry name" value="SecA_PP_bind"/>
    <property type="match status" value="1"/>
</dbReference>
<dbReference type="Pfam" id="PF07516">
    <property type="entry name" value="SecA_SW"/>
    <property type="match status" value="1"/>
</dbReference>
<dbReference type="PRINTS" id="PR00906">
    <property type="entry name" value="SECA"/>
</dbReference>
<dbReference type="SMART" id="SM00957">
    <property type="entry name" value="SecA_DEAD"/>
    <property type="match status" value="1"/>
</dbReference>
<dbReference type="SMART" id="SM00958">
    <property type="entry name" value="SecA_PP_bind"/>
    <property type="match status" value="1"/>
</dbReference>
<dbReference type="SUPFAM" id="SSF81886">
    <property type="entry name" value="Helical scaffold and wing domains of SecA"/>
    <property type="match status" value="1"/>
</dbReference>
<dbReference type="SUPFAM" id="SSF52540">
    <property type="entry name" value="P-loop containing nucleoside triphosphate hydrolases"/>
    <property type="match status" value="2"/>
</dbReference>
<dbReference type="SUPFAM" id="SSF81767">
    <property type="entry name" value="Pre-protein crosslinking domain of SecA"/>
    <property type="match status" value="1"/>
</dbReference>
<dbReference type="PROSITE" id="PS01312">
    <property type="entry name" value="SECA"/>
    <property type="match status" value="1"/>
</dbReference>
<dbReference type="PROSITE" id="PS51196">
    <property type="entry name" value="SECA_MOTOR_DEAD"/>
    <property type="match status" value="1"/>
</dbReference>
<name>SECA_BURCJ</name>
<keyword id="KW-0067">ATP-binding</keyword>
<keyword id="KW-0997">Cell inner membrane</keyword>
<keyword id="KW-1003">Cell membrane</keyword>
<keyword id="KW-0963">Cytoplasm</keyword>
<keyword id="KW-0472">Membrane</keyword>
<keyword id="KW-0479">Metal-binding</keyword>
<keyword id="KW-0547">Nucleotide-binding</keyword>
<keyword id="KW-0653">Protein transport</keyword>
<keyword id="KW-1278">Translocase</keyword>
<keyword id="KW-0811">Translocation</keyword>
<keyword id="KW-0813">Transport</keyword>
<keyword id="KW-0862">Zinc</keyword>
<protein>
    <recommendedName>
        <fullName evidence="1">Protein translocase subunit SecA</fullName>
        <ecNumber evidence="1">7.4.2.8</ecNumber>
    </recommendedName>
</protein>
<gene>
    <name evidence="1" type="primary">secA</name>
    <name type="ordered locus">BceJ2315_33910</name>
    <name type="ORF">BCAL3453</name>
</gene>
<evidence type="ECO:0000255" key="1">
    <source>
        <dbReference type="HAMAP-Rule" id="MF_01382"/>
    </source>
</evidence>
<proteinExistence type="inferred from homology"/>
<sequence>MTTGFLQKIFGSRNQRLVKQYQKTVATINALETQIEKLTDDQLRGKTDEFRQRVAAGESLDKLLPEAFAVCREASRRVLKMRHFDVQMIGGMVLHYGKIAEMRTGEGKTLVATLPVYLNALAGRGVHVVTVNDYLAQRDAEWMARLYNFLGLSVGINLSGMEHDQKQQAYAADITYGTNNEFGFDYLRDNMVYETDARVQRALNFAVVDEVDSILIDEARTPLIISGQAEDHTELYVRMNALPPLLERQIGEEKADGTGVEKPGDYTLDEKARQVFLTESGHEKAERLLAEWGLIGEGESLYAPQNITLMHHVYAALRAHTLFHKDQHYVVQNGEVVIVDEFTGRLMAGRRWSDGLHQAVEAKEHVKIQSENQTLASITFQNYFRMYAKLAGMTGTADTEAYEFNEIYGLETVVIPTNRPPKRIDKQDQIYKTAKERYDAVIRDIRDCYERGQPVLVGTTSIENSELLSHLLKQAGLPHEVLNAKQHEREAAIVAEAGRPKRITIATNMAGRGTDIVLGGNAEKQAAFIEADDSIPADEKARRIQKLHDEWETLHEEVKAAGGLHIIGTERHESRRIDNQLRGRAGRQGDPGSSRFYLSLDDPLLRIFAGDRVRSIMDRLKMPEGEAIEAGIVTRSIESAQRKVEARNFDIRKQLLEYDDVSNDQRKVIYQQRNELLEAHDITETITAMRHGVITEVVRQFVPEGSIEEQWDVPELEEALRNDWQLDLAIQEMVNESSSITAEEILDAVTTAADEQYEAKVAMVGRESFSAFERSVMLQTVDRLWREHLAALDHLRQGIHLRGYAQKNPKQEYKREAFELFAAMLDAIKQEVTRIVMNVQIQSPEQLEEAAEQIEERGGHLENVEYQHADYADAGAPVANVTTAAAAATATADMVGSAMTHGGPGGEMPKVGRNDPCPCGSGKKYKQCHGKLS</sequence>
<organism>
    <name type="scientific">Burkholderia cenocepacia (strain ATCC BAA-245 / DSM 16553 / LMG 16656 / NCTC 13227 / J2315 / CF5610)</name>
    <name type="common">Burkholderia cepacia (strain J2315)</name>
    <dbReference type="NCBI Taxonomy" id="216591"/>
    <lineage>
        <taxon>Bacteria</taxon>
        <taxon>Pseudomonadati</taxon>
        <taxon>Pseudomonadota</taxon>
        <taxon>Betaproteobacteria</taxon>
        <taxon>Burkholderiales</taxon>
        <taxon>Burkholderiaceae</taxon>
        <taxon>Burkholderia</taxon>
        <taxon>Burkholderia cepacia complex</taxon>
    </lineage>
</organism>
<reference key="1">
    <citation type="journal article" date="2009" name="J. Bacteriol.">
        <title>The genome of Burkholderia cenocepacia J2315, an epidemic pathogen of cystic fibrosis patients.</title>
        <authorList>
            <person name="Holden M.T."/>
            <person name="Seth-Smith H.M."/>
            <person name="Crossman L.C."/>
            <person name="Sebaihia M."/>
            <person name="Bentley S.D."/>
            <person name="Cerdeno-Tarraga A.M."/>
            <person name="Thomson N.R."/>
            <person name="Bason N."/>
            <person name="Quail M.A."/>
            <person name="Sharp S."/>
            <person name="Cherevach I."/>
            <person name="Churcher C."/>
            <person name="Goodhead I."/>
            <person name="Hauser H."/>
            <person name="Holroyd N."/>
            <person name="Mungall K."/>
            <person name="Scott P."/>
            <person name="Walker D."/>
            <person name="White B."/>
            <person name="Rose H."/>
            <person name="Iversen P."/>
            <person name="Mil-Homens D."/>
            <person name="Rocha E.P."/>
            <person name="Fialho A.M."/>
            <person name="Baldwin A."/>
            <person name="Dowson C."/>
            <person name="Barrell B.G."/>
            <person name="Govan J.R."/>
            <person name="Vandamme P."/>
            <person name="Hart C.A."/>
            <person name="Mahenthiralingam E."/>
            <person name="Parkhill J."/>
        </authorList>
    </citation>
    <scope>NUCLEOTIDE SEQUENCE [LARGE SCALE GENOMIC DNA]</scope>
    <source>
        <strain>ATCC BAA-245 / DSM 16553 / LMG 16656 / NCTC 13227 / J2315 / CF5610</strain>
    </source>
</reference>
<feature type="chain" id="PRO_1000144983" description="Protein translocase subunit SecA">
    <location>
        <begin position="1"/>
        <end position="933"/>
    </location>
</feature>
<feature type="binding site" evidence="1">
    <location>
        <position position="87"/>
    </location>
    <ligand>
        <name>ATP</name>
        <dbReference type="ChEBI" id="CHEBI:30616"/>
    </ligand>
</feature>
<feature type="binding site" evidence="1">
    <location>
        <begin position="105"/>
        <end position="109"/>
    </location>
    <ligand>
        <name>ATP</name>
        <dbReference type="ChEBI" id="CHEBI:30616"/>
    </ligand>
</feature>
<feature type="binding site" evidence="1">
    <location>
        <position position="515"/>
    </location>
    <ligand>
        <name>ATP</name>
        <dbReference type="ChEBI" id="CHEBI:30616"/>
    </ligand>
</feature>
<feature type="binding site" evidence="1">
    <location>
        <position position="917"/>
    </location>
    <ligand>
        <name>Zn(2+)</name>
        <dbReference type="ChEBI" id="CHEBI:29105"/>
    </ligand>
</feature>
<feature type="binding site" evidence="1">
    <location>
        <position position="919"/>
    </location>
    <ligand>
        <name>Zn(2+)</name>
        <dbReference type="ChEBI" id="CHEBI:29105"/>
    </ligand>
</feature>
<feature type="binding site" evidence="1">
    <location>
        <position position="928"/>
    </location>
    <ligand>
        <name>Zn(2+)</name>
        <dbReference type="ChEBI" id="CHEBI:29105"/>
    </ligand>
</feature>
<feature type="binding site" evidence="1">
    <location>
        <position position="929"/>
    </location>
    <ligand>
        <name>Zn(2+)</name>
        <dbReference type="ChEBI" id="CHEBI:29105"/>
    </ligand>
</feature>
<accession>B4E5Y3</accession>